<accession>Q8XEH3</accession>
<comment type="function">
    <text evidence="1">Catalyzes the deamination of various vicinal amino-alcohols to oxo compounds. Allows this organism to utilize ethanolamine as the sole source of nitrogen and carbon in the presence of external vitamin B12.</text>
</comment>
<comment type="catalytic activity">
    <reaction evidence="1">
        <text>ethanolamine = acetaldehyde + NH4(+)</text>
        <dbReference type="Rhea" id="RHEA:15313"/>
        <dbReference type="ChEBI" id="CHEBI:15343"/>
        <dbReference type="ChEBI" id="CHEBI:28938"/>
        <dbReference type="ChEBI" id="CHEBI:57603"/>
        <dbReference type="EC" id="4.3.1.7"/>
    </reaction>
</comment>
<comment type="cofactor">
    <cofactor evidence="1">
        <name>adenosylcob(III)alamin</name>
        <dbReference type="ChEBI" id="CHEBI:18408"/>
    </cofactor>
    <text evidence="1">Binds between the large and small subunits.</text>
</comment>
<comment type="pathway">
    <text evidence="1">Amine and polyamine degradation; ethanolamine degradation.</text>
</comment>
<comment type="subunit">
    <text evidence="1">The basic unit is a heterodimer which dimerizes to form tetramers. The heterotetramers trimerize; 6 large subunits form a core ring with 6 small subunits projecting outwards.</text>
</comment>
<comment type="subcellular location">
    <subcellularLocation>
        <location evidence="1">Bacterial microcompartment</location>
    </subcellularLocation>
</comment>
<comment type="similarity">
    <text evidence="1">Belongs to the EutC family.</text>
</comment>
<feature type="chain" id="PRO_0000205990" description="Ethanolamine ammonia-lyase small subunit">
    <location>
        <begin position="1"/>
        <end position="295"/>
    </location>
</feature>
<feature type="binding site" evidence="1">
    <location>
        <position position="207"/>
    </location>
    <ligand>
        <name>adenosylcob(III)alamin</name>
        <dbReference type="ChEBI" id="CHEBI:18408"/>
    </ligand>
</feature>
<feature type="binding site" evidence="1">
    <location>
        <position position="228"/>
    </location>
    <ligand>
        <name>adenosylcob(III)alamin</name>
        <dbReference type="ChEBI" id="CHEBI:18408"/>
    </ligand>
</feature>
<feature type="binding site" evidence="1">
    <location>
        <position position="258"/>
    </location>
    <ligand>
        <name>adenosylcob(III)alamin</name>
        <dbReference type="ChEBI" id="CHEBI:18408"/>
    </ligand>
</feature>
<feature type="sequence conflict" description="In Ref. 2; BAB36734." evidence="2" ref="2">
    <original>R</original>
    <variation>H</variation>
    <location>
        <position position="82"/>
    </location>
</feature>
<gene>
    <name evidence="1" type="primary">eutC</name>
    <name type="ordered locus">Z3705</name>
    <name type="ordered locus">ECs3311</name>
</gene>
<reference key="1">
    <citation type="journal article" date="2001" name="Nature">
        <title>Genome sequence of enterohaemorrhagic Escherichia coli O157:H7.</title>
        <authorList>
            <person name="Perna N.T."/>
            <person name="Plunkett G. III"/>
            <person name="Burland V."/>
            <person name="Mau B."/>
            <person name="Glasner J.D."/>
            <person name="Rose D.J."/>
            <person name="Mayhew G.F."/>
            <person name="Evans P.S."/>
            <person name="Gregor J."/>
            <person name="Kirkpatrick H.A."/>
            <person name="Posfai G."/>
            <person name="Hackett J."/>
            <person name="Klink S."/>
            <person name="Boutin A."/>
            <person name="Shao Y."/>
            <person name="Miller L."/>
            <person name="Grotbeck E.J."/>
            <person name="Davis N.W."/>
            <person name="Lim A."/>
            <person name="Dimalanta E.T."/>
            <person name="Potamousis K."/>
            <person name="Apodaca J."/>
            <person name="Anantharaman T.S."/>
            <person name="Lin J."/>
            <person name="Yen G."/>
            <person name="Schwartz D.C."/>
            <person name="Welch R.A."/>
            <person name="Blattner F.R."/>
        </authorList>
    </citation>
    <scope>NUCLEOTIDE SEQUENCE [LARGE SCALE GENOMIC DNA]</scope>
    <source>
        <strain>O157:H7 / EDL933 / ATCC 700927 / EHEC</strain>
    </source>
</reference>
<reference key="2">
    <citation type="journal article" date="2001" name="DNA Res.">
        <title>Complete genome sequence of enterohemorrhagic Escherichia coli O157:H7 and genomic comparison with a laboratory strain K-12.</title>
        <authorList>
            <person name="Hayashi T."/>
            <person name="Makino K."/>
            <person name="Ohnishi M."/>
            <person name="Kurokawa K."/>
            <person name="Ishii K."/>
            <person name="Yokoyama K."/>
            <person name="Han C.-G."/>
            <person name="Ohtsubo E."/>
            <person name="Nakayama K."/>
            <person name="Murata T."/>
            <person name="Tanaka M."/>
            <person name="Tobe T."/>
            <person name="Iida T."/>
            <person name="Takami H."/>
            <person name="Honda T."/>
            <person name="Sasakawa C."/>
            <person name="Ogasawara N."/>
            <person name="Yasunaga T."/>
            <person name="Kuhara S."/>
            <person name="Shiba T."/>
            <person name="Hattori M."/>
            <person name="Shinagawa H."/>
        </authorList>
    </citation>
    <scope>NUCLEOTIDE SEQUENCE [LARGE SCALE GENOMIC DNA]</scope>
    <source>
        <strain>O157:H7 / Sakai / RIMD 0509952 / EHEC</strain>
    </source>
</reference>
<proteinExistence type="inferred from homology"/>
<organism>
    <name type="scientific">Escherichia coli O157:H7</name>
    <dbReference type="NCBI Taxonomy" id="83334"/>
    <lineage>
        <taxon>Bacteria</taxon>
        <taxon>Pseudomonadati</taxon>
        <taxon>Pseudomonadota</taxon>
        <taxon>Gammaproteobacteria</taxon>
        <taxon>Enterobacterales</taxon>
        <taxon>Enterobacteriaceae</taxon>
        <taxon>Escherichia</taxon>
    </lineage>
</organism>
<sequence>MDQKQIEEIVRSVMASMGQTAPAPSEAKCATTTCAAPVTSESCALDLGSAEAKVWIGVENPHRADVLTELRRSTVARVCTGRAGPRPRTLALLRFLADHSRSKDTVLKEVPEEWVKAQGLLEVRSEISDKNLYLTRPDMGRRLCAEAVEALKAQCVANPDVQVVISDGLSTDAITVNYEEILPPLMAGLKQAGLKVGTPFFVRYGRVKIEDQIGEILGAKVVILLVGERPGLGQSESLSCYAVYSPRMATTVEADRTCISNIHQGGTPPVEAAAVIVDLAKRMLEQKASGINMTR</sequence>
<name>EUTC_ECO57</name>
<evidence type="ECO:0000255" key="1">
    <source>
        <dbReference type="HAMAP-Rule" id="MF_00601"/>
    </source>
</evidence>
<evidence type="ECO:0000305" key="2"/>
<protein>
    <recommendedName>
        <fullName evidence="1">Ethanolamine ammonia-lyase small subunit</fullName>
        <shortName evidence="1">EAL small subunit</shortName>
        <ecNumber evidence="1">4.3.1.7</ecNumber>
    </recommendedName>
</protein>
<keyword id="KW-1283">Bacterial microcompartment</keyword>
<keyword id="KW-0846">Cobalamin</keyword>
<keyword id="KW-0170">Cobalt</keyword>
<keyword id="KW-0456">Lyase</keyword>
<keyword id="KW-1185">Reference proteome</keyword>
<dbReference type="EC" id="4.3.1.7" evidence="1"/>
<dbReference type="EMBL" id="AE005174">
    <property type="protein sequence ID" value="AAG57558.1"/>
    <property type="molecule type" value="Genomic_DNA"/>
</dbReference>
<dbReference type="EMBL" id="BA000007">
    <property type="protein sequence ID" value="BAB36734.1"/>
    <property type="molecule type" value="Genomic_DNA"/>
</dbReference>
<dbReference type="PIR" id="B85887">
    <property type="entry name" value="B85887"/>
</dbReference>
<dbReference type="PIR" id="G91042">
    <property type="entry name" value="G91042"/>
</dbReference>
<dbReference type="RefSeq" id="NP_311338.1">
    <property type="nucleotide sequence ID" value="NC_002695.1"/>
</dbReference>
<dbReference type="RefSeq" id="WP_000372370.1">
    <property type="nucleotide sequence ID" value="NZ_VOAI01000001.1"/>
</dbReference>
<dbReference type="SMR" id="Q8XEH3"/>
<dbReference type="STRING" id="155864.Z3705"/>
<dbReference type="GeneID" id="915296"/>
<dbReference type="KEGG" id="ece:Z3705"/>
<dbReference type="KEGG" id="ecs:ECs_3311"/>
<dbReference type="PATRIC" id="fig|386585.9.peg.3458"/>
<dbReference type="eggNOG" id="COG4302">
    <property type="taxonomic scope" value="Bacteria"/>
</dbReference>
<dbReference type="HOGENOM" id="CLU_068224_0_0_6"/>
<dbReference type="OMA" id="FQFAHAQ"/>
<dbReference type="UniPathway" id="UPA00560"/>
<dbReference type="Proteomes" id="UP000000558">
    <property type="component" value="Chromosome"/>
</dbReference>
<dbReference type="Proteomes" id="UP000002519">
    <property type="component" value="Chromosome"/>
</dbReference>
<dbReference type="GO" id="GO:0009350">
    <property type="term" value="C:ethanolamine ammonia-lyase complex"/>
    <property type="evidence" value="ECO:0007669"/>
    <property type="project" value="UniProtKB-UniRule"/>
</dbReference>
<dbReference type="GO" id="GO:0031471">
    <property type="term" value="C:ethanolamine degradation polyhedral organelle"/>
    <property type="evidence" value="ECO:0007669"/>
    <property type="project" value="UniProtKB-UniRule"/>
</dbReference>
<dbReference type="GO" id="GO:0031419">
    <property type="term" value="F:cobalamin binding"/>
    <property type="evidence" value="ECO:0007669"/>
    <property type="project" value="UniProtKB-UniRule"/>
</dbReference>
<dbReference type="GO" id="GO:0008851">
    <property type="term" value="F:ethanolamine ammonia-lyase activity"/>
    <property type="evidence" value="ECO:0007669"/>
    <property type="project" value="UniProtKB-UniRule"/>
</dbReference>
<dbReference type="GO" id="GO:0006520">
    <property type="term" value="P:amino acid metabolic process"/>
    <property type="evidence" value="ECO:0007669"/>
    <property type="project" value="InterPro"/>
</dbReference>
<dbReference type="GO" id="GO:0046336">
    <property type="term" value="P:ethanolamine catabolic process"/>
    <property type="evidence" value="ECO:0007669"/>
    <property type="project" value="UniProtKB-UniRule"/>
</dbReference>
<dbReference type="FunFam" id="3.40.50.11240:FF:000001">
    <property type="entry name" value="Ethanolamine ammonia-lyase light chain"/>
    <property type="match status" value="1"/>
</dbReference>
<dbReference type="Gene3D" id="6.10.140.690">
    <property type="match status" value="1"/>
</dbReference>
<dbReference type="Gene3D" id="6.10.250.2060">
    <property type="match status" value="1"/>
</dbReference>
<dbReference type="Gene3D" id="3.40.50.11240">
    <property type="entry name" value="Ethanolamine ammonia-lyase light chain (EutC)"/>
    <property type="match status" value="1"/>
</dbReference>
<dbReference type="HAMAP" id="MF_00601">
    <property type="entry name" value="EutC"/>
    <property type="match status" value="1"/>
</dbReference>
<dbReference type="InterPro" id="IPR009246">
    <property type="entry name" value="EutC"/>
</dbReference>
<dbReference type="InterPro" id="IPR042251">
    <property type="entry name" value="EutC_C"/>
</dbReference>
<dbReference type="NCBIfam" id="NF003971">
    <property type="entry name" value="PRK05465.1"/>
    <property type="match status" value="1"/>
</dbReference>
<dbReference type="PANTHER" id="PTHR39330">
    <property type="entry name" value="ETHANOLAMINE AMMONIA-LYASE LIGHT CHAIN"/>
    <property type="match status" value="1"/>
</dbReference>
<dbReference type="PANTHER" id="PTHR39330:SF1">
    <property type="entry name" value="ETHANOLAMINE AMMONIA-LYASE SMALL SUBUNIT"/>
    <property type="match status" value="1"/>
</dbReference>
<dbReference type="Pfam" id="PF05985">
    <property type="entry name" value="EutC"/>
    <property type="match status" value="1"/>
</dbReference>
<dbReference type="PIRSF" id="PIRSF018982">
    <property type="entry name" value="EutC"/>
    <property type="match status" value="1"/>
</dbReference>